<gene>
    <name evidence="8" type="primary">mamZ</name>
    <name type="ordered locus">MGMSRv2__2323</name>
</gene>
<accession>V6F4W4</accession>
<sequence length="648" mass="70543">MLEAWMPKSGKPSTGTTPADFAPTQWNIIYLLMTVGSLVAALSISIQPLLLDKIFGIAFEKEGAVNADIQVVAEIVSIVCVGWFGLLSDRIGRVRIIATGFLIAVAGAAMSLLSLQIGLAFGAAGLVLFYLTRVLLTVGADTVQLQLSTLVGDVSSRANRPRLMGNLVFMMVFGGTMLSAIIMQMADYKGGVFIIMCLPLLIGIAGFQMTRESLRDVAQPQQAPTGDEHPLRQVWSVITSDPRLQLAFAAAFYTRADVIILSLFFSLWCISVSDLVGVTRTYATAHAAVMIGLLGLAVLAAIPLWRSFIERHSRISAIGASLSLAAVGYIWLGMFANPFNWLVALPLLMVGIGHAGCFVTLQVLTVDVSPKPILGAMVGAGYLVGGLGTVMLVQSGGYYFDALGPRAPFILMGTGKMLVTLYAAWLLANGIDETCDHHLKSTRKVDWKPLVFLTAALPFVWLIGRSVIEGYFSNGSLGEAPVGFVNRYLGDWAFTFLIISLSMRPVQEITGIKSLAKYRRMIGLFAFFYAVLHVLAYVTLEWALNLGDMASDIYKRPFILLGLAAFLLLIPLAFTSTNSQIKKIGGKRWKRLHRATYVINALVALHFILAANHENGEPYVYAAAVIVLLWYRFYQWRGGNVLRALRIG</sequence>
<reference key="1">
    <citation type="journal article" date="2014" name="Genome Announc.">
        <title>Complete genome sequence of Magnetospirillum gryphiswaldense MSR-1.</title>
        <authorList>
            <person name="Wang X."/>
            <person name="Wang Q."/>
            <person name="Zhang W."/>
            <person name="Wang Y."/>
            <person name="Li L."/>
            <person name="Wen T."/>
            <person name="Zhang T."/>
            <person name="Zhang Y."/>
            <person name="Xu J."/>
            <person name="Hu J."/>
            <person name="Li S."/>
            <person name="Liu L."/>
            <person name="Liu J."/>
            <person name="Jiang W."/>
            <person name="Tian J."/>
            <person name="Li Y."/>
            <person name="Schuler D."/>
            <person name="Wang L."/>
            <person name="Li J."/>
        </authorList>
    </citation>
    <scope>NUCLEOTIDE SEQUENCE [LARGE SCALE GENOMIC DNA]</scope>
    <source>
        <strain>DSM 6361 / JCM 21280 / NBRC 15271 / MSR-1</strain>
    </source>
</reference>
<reference key="2">
    <citation type="journal article" date="2010" name="J. Bacteriol.">
        <title>Deletion of the ftsZ-like gene results in the production of superparamagnetic magnetite magnetosomes in Magnetospirillum gryphiswaldense.</title>
        <authorList>
            <person name="Ding Y."/>
            <person name="Li J."/>
            <person name="Liu J."/>
            <person name="Yang J."/>
            <person name="Jiang W."/>
            <person name="Tian J."/>
            <person name="Li Y."/>
            <person name="Pan Y."/>
            <person name="Li J."/>
        </authorList>
    </citation>
    <scope>INDUCTION</scope>
    <source>
        <strain>DSM 6361 / JCM 21280 / NBRC 15271 / MSR-1</strain>
    </source>
</reference>
<reference key="3">
    <citation type="journal article" date="2011" name="PLoS ONE">
        <title>Functional analysis of the magnetosome island in Magnetospirillum gryphiswaldense: the mamAB operon is sufficient for magnetite biomineralization.</title>
        <authorList>
            <person name="Lohsse A."/>
            <person name="Ullrich S."/>
            <person name="Katzmann E."/>
            <person name="Borg S."/>
            <person name="Wanner G."/>
            <person name="Richter M."/>
            <person name="Voigt B."/>
            <person name="Schweder T."/>
            <person name="Schueler D."/>
        </authorList>
    </citation>
    <scope>PROBABLE OPERON</scope>
    <scope>DISRUPTION PHENOTYPE</scope>
    <source>
        <strain>DSM 6361 / JCM 21280 / NBRC 15271 / MSR-1</strain>
    </source>
</reference>
<reference key="4">
    <citation type="journal article" date="2013" name="Mol. Microbiol.">
        <title>The magnetosome proteins MamX, MamZ and MamH are involved in redox control of magnetite biomineralization in Magnetospirillum gryphiswaldense.</title>
        <authorList>
            <person name="Raschdorf O."/>
            <person name="Mueller F.D."/>
            <person name="Posfai M."/>
            <person name="Plitzko J.M."/>
            <person name="Schueler D."/>
        </authorList>
    </citation>
    <scope>FUNCTION</scope>
    <scope>PROBABLE OPERON</scope>
    <scope>DOMAIN</scope>
    <scope>DISRUPTION PHENOTYPE</scope>
    <source>
        <strain>DSM 6361 / JCM 21280 / NBRC 15271 / MSR-1</strain>
    </source>
</reference>
<reference key="5">
    <citation type="journal article" date="2013" name="BMC Microbiol.">
        <title>MamX encoded by the mamXY operon is involved in control of magnetosome maturation in Magnetospirillum gryphiswaldense MSR-1.</title>
        <authorList>
            <person name="Yang J."/>
            <person name="Li S."/>
            <person name="Huang X."/>
            <person name="Li J."/>
            <person name="Li L."/>
            <person name="Pan Y."/>
            <person name="Li Y."/>
        </authorList>
    </citation>
    <scope>INDUCTION</scope>
    <source>
        <strain>DSM 6361 / JCM 21280 / NBRC 15271 / MSR-1</strain>
    </source>
</reference>
<reference key="6">
    <citation type="journal article" date="2019" name="Appl. Environ. Microbiol.">
        <title>Work Patterns of MamXY Proteins during Magnetosome Formation in Magnetospirillum gryphiswaldense MSR-1.</title>
        <authorList>
            <person name="Wang Q."/>
            <person name="Wu S."/>
            <person name="Li X."/>
            <person name="Zhang T."/>
            <person name="Yang J."/>
            <person name="Wang X."/>
            <person name="Li F."/>
            <person name="Li Y."/>
            <person name="Peng Y."/>
            <person name="Li J."/>
        </authorList>
    </citation>
    <scope>POSSIBLE FUNCTION</scope>
    <scope>PROBABLE INTERACTION WITH FTSZ-LIKE AND MAMY</scope>
    <scope>SUBCELLULAR LOCATION</scope>
    <scope>INDUCTION</scope>
    <source>
        <strain>DSM 6361 / JCM 21280 / NBRC 15271 / MSR-1</strain>
    </source>
</reference>
<evidence type="ECO:0000250" key="1">
    <source>
        <dbReference type="UniProtKB" id="Q2W8K5"/>
    </source>
</evidence>
<evidence type="ECO:0000255" key="2"/>
<evidence type="ECO:0000269" key="3">
    <source>
    </source>
</evidence>
<evidence type="ECO:0000269" key="4">
    <source>
    </source>
</evidence>
<evidence type="ECO:0000269" key="5">
    <source>
    </source>
</evidence>
<evidence type="ECO:0000269" key="6">
    <source>
    </source>
</evidence>
<evidence type="ECO:0000269" key="7">
    <source>
    </source>
</evidence>
<evidence type="ECO:0000303" key="8">
    <source>
    </source>
</evidence>
<evidence type="ECO:0000305" key="9"/>
<evidence type="ECO:0000305" key="10">
    <source>
    </source>
</evidence>
<evidence type="ECO:0000305" key="11">
    <source>
    </source>
</evidence>
<evidence type="ECO:0000305" key="12">
    <source>
    </source>
</evidence>
<evidence type="ECO:0000305" key="13">
    <source>
    </source>
</evidence>
<protein>
    <recommendedName>
        <fullName evidence="8">Magnetosome protein MamZ</fullName>
    </recommendedName>
    <alternativeName>
        <fullName>Probable magnetosome permease MamZ</fullName>
    </alternativeName>
</protein>
<keyword id="KW-0091">Biomineralization</keyword>
<keyword id="KW-0406">Ion transport</keyword>
<keyword id="KW-0408">Iron</keyword>
<keyword id="KW-0410">Iron transport</keyword>
<keyword id="KW-1281">Magnetosome</keyword>
<keyword id="KW-0472">Membrane</keyword>
<keyword id="KW-1185">Reference proteome</keyword>
<keyword id="KW-0812">Transmembrane</keyword>
<keyword id="KW-1133">Transmembrane helix</keyword>
<keyword id="KW-0813">Transport</keyword>
<comment type="function">
    <text evidence="5 13">Required for correct biomineralization of the magnetosome; probably converts and then transports some form of iron. It is partially functionally redundant with MamH (PubMed:23889511). May function with MamX, MamY amd Mms6 in biomineralization (Probable). Despite its strong similarity to MsrQ (AC V6EX82) this protein does not genetically interact with bona fide MsrP (AC V6F0A4), which is encoded elsewhere in the genome (PubMed:23889511).</text>
</comment>
<comment type="subunit">
    <text evidence="7">Probably interacts with FtsZ-like and MamY proteins.</text>
</comment>
<comment type="subcellular location">
    <subcellularLocation>
        <location evidence="1 11 13">Magnetosome membrane</location>
        <topology evidence="2">Multi-pass membrane protein</topology>
    </subcellularLocation>
</comment>
<comment type="induction">
    <text evidence="3 6 7 10 11 12">Expressed in exponential phase, peaks about 18 hours. The most highly expressed gene in this operon (PubMed:20023033, PubMed:24020498). Protein is associated with magnetosomes at mid-development then decreases (at protein level) (PubMed:30367002). Third gene in the 4 gene mamXY operon (Probable) (PubMed:20023033).</text>
</comment>
<comment type="domain">
    <text evidence="5">Deletion of the C-terminal 'ferric reductase' domain (residues 444-645) phenocopies the deletion mutant; makes a magnetosome with normal crystals sandwiched between flake-like crystals.</text>
</comment>
<comment type="disruption phenotype">
    <text evidence="4 5">Slightly reduced magnetic response, produces chains of wild-type magnetite crystals sandwiched between irregularly shaped, small flake-like crystals. The flake-like crystals are hematite not magnetite. Phenotype is exacerbated when grown in NH(4)(+) instead of NO(3)(-) medium. Double mamH-mamZ deletion cells have a poor magnetic response and very few wild-type crystals; most cells have flake-like crystals (PubMed:23889511). Deletion of 4 consecutive genes (mamY, mamX, mamZ, ftsZm) leads to cells with an intermediate magnetic response where magnetosomes have short chains of nearly regularly shaped, cubo-octahedral crystals flanked by small particles with poorly defined morphologies (PubMed:22043287).</text>
</comment>
<comment type="miscellaneous">
    <text evidence="9">This bacteria makes up to 60 cubo-octahedral magnetosomes of about 45 nm in diameter which contain membrane-bound crystals of magnetite (Fe(3)O(4)).</text>
</comment>
<comment type="similarity">
    <text evidence="9">In the N-terminal section; belongs to the major facilitator superfamily.</text>
</comment>
<comment type="caution">
    <text evidence="11">It is uncertain whether Met-1 or Met-6 is the initiator.</text>
</comment>
<dbReference type="EMBL" id="HG794546">
    <property type="protein sequence ID" value="CDK99538.1"/>
    <property type="molecule type" value="Genomic_DNA"/>
</dbReference>
<dbReference type="SMR" id="V6F4W4"/>
<dbReference type="STRING" id="1430440.MGMSRv2__2323"/>
<dbReference type="KEGG" id="mgy:MGMSRv2__2323"/>
<dbReference type="eggNOG" id="COG2717">
    <property type="taxonomic scope" value="Bacteria"/>
</dbReference>
<dbReference type="HOGENOM" id="CLU_426294_0_0_5"/>
<dbReference type="Proteomes" id="UP000018922">
    <property type="component" value="Chromosome I"/>
</dbReference>
<dbReference type="GO" id="GO:0110146">
    <property type="term" value="C:magnetosome membrane"/>
    <property type="evidence" value="ECO:0000250"/>
    <property type="project" value="UniProtKB"/>
</dbReference>
<dbReference type="GO" id="GO:0005886">
    <property type="term" value="C:plasma membrane"/>
    <property type="evidence" value="ECO:0007669"/>
    <property type="project" value="UniProtKB-UniRule"/>
</dbReference>
<dbReference type="GO" id="GO:0009055">
    <property type="term" value="F:electron transfer activity"/>
    <property type="evidence" value="ECO:0007669"/>
    <property type="project" value="UniProtKB-UniRule"/>
</dbReference>
<dbReference type="GO" id="GO:0010181">
    <property type="term" value="F:FMN binding"/>
    <property type="evidence" value="ECO:0007669"/>
    <property type="project" value="UniProtKB-UniRule"/>
</dbReference>
<dbReference type="GO" id="GO:0020037">
    <property type="term" value="F:heme binding"/>
    <property type="evidence" value="ECO:0007669"/>
    <property type="project" value="UniProtKB-UniRule"/>
</dbReference>
<dbReference type="GO" id="GO:0016679">
    <property type="term" value="F:oxidoreductase activity, acting on diphenols and related substances as donors"/>
    <property type="evidence" value="ECO:0007669"/>
    <property type="project" value="TreeGrafter"/>
</dbReference>
<dbReference type="GO" id="GO:0022857">
    <property type="term" value="F:transmembrane transporter activity"/>
    <property type="evidence" value="ECO:0007669"/>
    <property type="project" value="InterPro"/>
</dbReference>
<dbReference type="GO" id="GO:0006826">
    <property type="term" value="P:iron ion transport"/>
    <property type="evidence" value="ECO:0007669"/>
    <property type="project" value="UniProtKB-KW"/>
</dbReference>
<dbReference type="GO" id="GO:0030091">
    <property type="term" value="P:protein repair"/>
    <property type="evidence" value="ECO:0007669"/>
    <property type="project" value="UniProtKB-UniRule"/>
</dbReference>
<dbReference type="Gene3D" id="1.20.1250.20">
    <property type="entry name" value="MFS general substrate transporter like domains"/>
    <property type="match status" value="1"/>
</dbReference>
<dbReference type="HAMAP" id="MF_01207">
    <property type="entry name" value="MsrQ"/>
    <property type="match status" value="1"/>
</dbReference>
<dbReference type="InterPro" id="IPR013130">
    <property type="entry name" value="Fe3_Rdtase_TM_dom"/>
</dbReference>
<dbReference type="InterPro" id="IPR011701">
    <property type="entry name" value="MFS"/>
</dbReference>
<dbReference type="InterPro" id="IPR020846">
    <property type="entry name" value="MFS_dom"/>
</dbReference>
<dbReference type="InterPro" id="IPR036259">
    <property type="entry name" value="MFS_trans_sf"/>
</dbReference>
<dbReference type="InterPro" id="IPR022837">
    <property type="entry name" value="MsrQ-like"/>
</dbReference>
<dbReference type="NCBIfam" id="NF040986">
    <property type="entry name" value="MamH"/>
    <property type="match status" value="1"/>
</dbReference>
<dbReference type="NCBIfam" id="NF040998">
    <property type="entry name" value="MamZ"/>
    <property type="match status" value="1"/>
</dbReference>
<dbReference type="PANTHER" id="PTHR36964">
    <property type="entry name" value="PROTEIN-METHIONINE-SULFOXIDE REDUCTASE HEME-BINDING SUBUNIT MSRQ"/>
    <property type="match status" value="1"/>
</dbReference>
<dbReference type="PANTHER" id="PTHR36964:SF1">
    <property type="entry name" value="PROTEIN-METHIONINE-SULFOXIDE REDUCTASE HEME-BINDING SUBUNIT MSRQ"/>
    <property type="match status" value="1"/>
</dbReference>
<dbReference type="Pfam" id="PF01794">
    <property type="entry name" value="Ferric_reduct"/>
    <property type="match status" value="1"/>
</dbReference>
<dbReference type="Pfam" id="PF07690">
    <property type="entry name" value="MFS_1"/>
    <property type="match status" value="1"/>
</dbReference>
<dbReference type="SUPFAM" id="SSF103473">
    <property type="entry name" value="MFS general substrate transporter"/>
    <property type="match status" value="1"/>
</dbReference>
<dbReference type="PROSITE" id="PS50850">
    <property type="entry name" value="MFS"/>
    <property type="match status" value="1"/>
</dbReference>
<organism>
    <name type="scientific">Magnetospirillum gryphiswaldense (strain DSM 6361 / JCM 21280 / NBRC 15271 / MSR-1)</name>
    <dbReference type="NCBI Taxonomy" id="431944"/>
    <lineage>
        <taxon>Bacteria</taxon>
        <taxon>Pseudomonadati</taxon>
        <taxon>Pseudomonadota</taxon>
        <taxon>Alphaproteobacteria</taxon>
        <taxon>Rhodospirillales</taxon>
        <taxon>Rhodospirillaceae</taxon>
        <taxon>Magnetospirillum</taxon>
    </lineage>
</organism>
<name>MAMZ_MAGGM</name>
<feature type="chain" id="PRO_0000447746" description="Magnetosome protein MamZ">
    <location>
        <begin position="1"/>
        <end position="648"/>
    </location>
</feature>
<feature type="transmembrane region" description="Helical" evidence="2">
    <location>
        <begin position="28"/>
        <end position="49"/>
    </location>
</feature>
<feature type="transmembrane region" description="Helical" evidence="2">
    <location>
        <begin position="69"/>
        <end position="87"/>
    </location>
</feature>
<feature type="transmembrane region" description="Helical" evidence="2">
    <location>
        <begin position="94"/>
        <end position="113"/>
    </location>
</feature>
<feature type="transmembrane region" description="Helical" evidence="2">
    <location>
        <begin position="119"/>
        <end position="143"/>
    </location>
</feature>
<feature type="transmembrane region" description="Helical" evidence="2">
    <location>
        <begin position="163"/>
        <end position="182"/>
    </location>
</feature>
<feature type="transmembrane region" description="Helical" evidence="2">
    <location>
        <begin position="188"/>
        <end position="207"/>
    </location>
</feature>
<feature type="transmembrane region" description="Helical" evidence="2">
    <location>
        <begin position="252"/>
        <end position="273"/>
    </location>
</feature>
<feature type="transmembrane region" description="Helical" evidence="2">
    <location>
        <begin position="285"/>
        <end position="305"/>
    </location>
</feature>
<feature type="transmembrane region" description="Helical" evidence="2">
    <location>
        <begin position="317"/>
        <end position="335"/>
    </location>
</feature>
<feature type="transmembrane region" description="Helical" evidence="2">
    <location>
        <begin position="341"/>
        <end position="361"/>
    </location>
</feature>
<feature type="transmembrane region" description="Helical" evidence="2">
    <location>
        <begin position="373"/>
        <end position="395"/>
    </location>
</feature>
<feature type="transmembrane region" description="Helical" evidence="2">
    <location>
        <begin position="407"/>
        <end position="428"/>
    </location>
</feature>
<feature type="transmembrane region" description="Helical" evidence="2">
    <location>
        <begin position="449"/>
        <end position="468"/>
    </location>
</feature>
<feature type="transmembrane region" description="Helical" evidence="2">
    <location>
        <begin position="488"/>
        <end position="506"/>
    </location>
</feature>
<feature type="transmembrane region" description="Helical" evidence="2">
    <location>
        <begin position="518"/>
        <end position="538"/>
    </location>
</feature>
<feature type="transmembrane region" description="Helical" evidence="2">
    <location>
        <begin position="558"/>
        <end position="574"/>
    </location>
</feature>
<feature type="transmembrane region" description="Helical" evidence="2">
    <location>
        <begin position="595"/>
        <end position="612"/>
    </location>
</feature>
<feature type="transmembrane region" description="Helical" evidence="2">
    <location>
        <begin position="618"/>
        <end position="634"/>
    </location>
</feature>
<feature type="region of interest" description="Major facilitator domain" evidence="9">
    <location>
        <begin position="1"/>
        <end position="431"/>
    </location>
</feature>
<feature type="region of interest" description="Ferric reductase-like domain, required for correct magnetite crystal formation" evidence="5">
    <location>
        <begin position="444"/>
        <end position="645"/>
    </location>
</feature>
<proteinExistence type="evidence at protein level"/>